<evidence type="ECO:0000250" key="1">
    <source>
        <dbReference type="UniProtKB" id="P06935"/>
    </source>
</evidence>
<evidence type="ECO:0000250" key="2">
    <source>
        <dbReference type="UniProtKB" id="P14336"/>
    </source>
</evidence>
<evidence type="ECO:0000250" key="3">
    <source>
        <dbReference type="UniProtKB" id="P17763"/>
    </source>
</evidence>
<evidence type="ECO:0000255" key="4"/>
<evidence type="ECO:0000255" key="5">
    <source>
        <dbReference type="PROSITE-ProRule" id="PRU00498"/>
    </source>
</evidence>
<feature type="chain" id="PRO_0000405183" description="Genome polyprotein">
    <location>
        <begin position="1" status="less than"/>
        <end position="496" status="greater than"/>
    </location>
</feature>
<feature type="chain" id="PRO_0000037831" description="Envelope protein E" evidence="1">
    <location>
        <begin position="1"/>
        <end position="496"/>
    </location>
</feature>
<feature type="topological domain" description="Extracellular" evidence="4">
    <location>
        <begin position="1" status="less than"/>
        <end position="447"/>
    </location>
</feature>
<feature type="transmembrane region" description="Helical" evidence="4">
    <location>
        <begin position="448"/>
        <end position="468"/>
    </location>
</feature>
<feature type="topological domain" description="Cytoplasmic" evidence="4">
    <location>
        <begin position="469"/>
        <end position="479"/>
    </location>
</feature>
<feature type="transmembrane region" description="Helical" evidence="4">
    <location>
        <begin position="480"/>
        <end position="496" status="greater than"/>
    </location>
</feature>
<feature type="region of interest" description="Fusion peptide" evidence="2">
    <location>
        <begin position="98"/>
        <end position="111"/>
    </location>
</feature>
<feature type="glycosylation site" description="N-linked (GlcNAc...) asparagine; by host" evidence="5">
    <location>
        <position position="154"/>
    </location>
</feature>
<feature type="disulfide bond" evidence="2">
    <location>
        <begin position="3"/>
        <end position="30"/>
    </location>
</feature>
<feature type="disulfide bond" evidence="3">
    <location>
        <begin position="60"/>
        <end position="121"/>
    </location>
</feature>
<feature type="disulfide bond" evidence="2">
    <location>
        <begin position="60"/>
        <end position="116"/>
    </location>
</feature>
<feature type="disulfide bond" evidence="2">
    <location>
        <begin position="74"/>
        <end position="105"/>
    </location>
</feature>
<feature type="disulfide bond" evidence="2">
    <location>
        <begin position="92"/>
        <end position="121"/>
    </location>
</feature>
<feature type="disulfide bond" evidence="3">
    <location>
        <begin position="92"/>
        <end position="116"/>
    </location>
</feature>
<feature type="disulfide bond" evidence="2">
    <location>
        <begin position="186"/>
        <end position="290"/>
    </location>
</feature>
<feature type="disulfide bond" evidence="2">
    <location>
        <begin position="307"/>
        <end position="338"/>
    </location>
</feature>
<feature type="non-terminal residue">
    <location>
        <position position="1"/>
    </location>
</feature>
<feature type="non-terminal residue">
    <location>
        <position position="496"/>
    </location>
</feature>
<name>POLG_LIV31</name>
<reference key="1">
    <citation type="journal article" date="1993" name="J. Gen. Virol.">
        <title>Sequencing and antigenic studies of a Norwegian virus isolated from encephalomyelitic sheep confirm the existence of louping ill virus outside Great Britain and Ireland.</title>
        <authorList>
            <person name="Gao G.F."/>
            <person name="Jiang W.R."/>
            <person name="Hussain M.H."/>
            <person name="Venugopal K."/>
            <person name="Gritsun T.S."/>
            <person name="Reid H.W."/>
            <person name="Gould E.A."/>
        </authorList>
    </citation>
    <scope>NUCLEOTIDE SEQUENCE [GENOMIC RNA]</scope>
</reference>
<organismHost>
    <name type="scientific">Bos taurus</name>
    <name type="common">Bovine</name>
    <dbReference type="NCBI Taxonomy" id="9913"/>
</organismHost>
<organismHost>
    <name type="scientific">Canis lupus familiaris</name>
    <name type="common">Dog</name>
    <name type="synonym">Canis familiaris</name>
    <dbReference type="NCBI Taxonomy" id="9615"/>
</organismHost>
<organismHost>
    <name type="scientific">Cervinae</name>
    <dbReference type="NCBI Taxonomy" id="34878"/>
</organismHost>
<organismHost>
    <name type="scientific">Equus caballus</name>
    <name type="common">Horse</name>
    <dbReference type="NCBI Taxonomy" id="9796"/>
</organismHost>
<organismHost>
    <name type="scientific">Homo sapiens</name>
    <name type="common">Human</name>
    <dbReference type="NCBI Taxonomy" id="9606"/>
</organismHost>
<organismHost>
    <name type="scientific">Ixodes ricinus</name>
    <name type="common">Common tick</name>
    <name type="synonym">Acarus ricinus</name>
    <dbReference type="NCBI Taxonomy" id="34613"/>
</organismHost>
<organismHost>
    <name type="scientific">Ovis aries</name>
    <name type="common">Sheep</name>
    <dbReference type="NCBI Taxonomy" id="9940"/>
</organismHost>
<organismHost>
    <name type="scientific">Sus scrofa</name>
    <name type="common">Pig</name>
    <dbReference type="NCBI Taxonomy" id="9823"/>
</organismHost>
<protein>
    <recommendedName>
        <fullName>Genome polyprotein</fullName>
    </recommendedName>
    <component>
        <recommendedName>
            <fullName>Envelope protein E</fullName>
        </recommendedName>
    </component>
</protein>
<organism>
    <name type="scientific">Louping ill virus (strain 31)</name>
    <name type="common">Li</name>
    <dbReference type="NCBI Taxonomy" id="36386"/>
    <lineage>
        <taxon>Viruses</taxon>
        <taxon>Riboviria</taxon>
        <taxon>Orthornavirae</taxon>
        <taxon>Kitrinoviricota</taxon>
        <taxon>Flasuviricetes</taxon>
        <taxon>Amarillovirales</taxon>
        <taxon>Flaviviridae</taxon>
        <taxon>Orthoflavivirus</taxon>
        <taxon>Orthoflavivirus loupingi</taxon>
    </lineage>
</organism>
<keyword id="KW-1165">Clathrin-mediated endocytosis of virus by host</keyword>
<keyword id="KW-0165">Cleavage on pair of basic residues</keyword>
<keyword id="KW-1015">Disulfide bond</keyword>
<keyword id="KW-1170">Fusion of virus membrane with host endosomal membrane</keyword>
<keyword id="KW-1168">Fusion of virus membrane with host membrane</keyword>
<keyword id="KW-0325">Glycoprotein</keyword>
<keyword id="KW-1038">Host endoplasmic reticulum</keyword>
<keyword id="KW-1043">Host membrane</keyword>
<keyword id="KW-0945">Host-virus interaction</keyword>
<keyword id="KW-1090">Inhibition of host innate immune response by virus</keyword>
<keyword id="KW-0472">Membrane</keyword>
<keyword id="KW-0941">Suppressor of RNA silencing</keyword>
<keyword id="KW-0812">Transmembrane</keyword>
<keyword id="KW-1133">Transmembrane helix</keyword>
<keyword id="KW-1161">Viral attachment to host cell</keyword>
<keyword id="KW-0261">Viral envelope protein</keyword>
<keyword id="KW-0899">Viral immunoevasion</keyword>
<keyword id="KW-1162">Viral penetration into host cytoplasm</keyword>
<keyword id="KW-0946">Virion</keyword>
<keyword id="KW-1164">Virus endocytosis by host</keyword>
<keyword id="KW-1160">Virus entry into host cell</keyword>
<keyword id="KW-0862">Zinc</keyword>
<dbReference type="EMBL" id="D12937">
    <property type="protein sequence ID" value="BAA02313.1"/>
    <property type="molecule type" value="Genomic_RNA"/>
</dbReference>
<dbReference type="PIR" id="JQ1882">
    <property type="entry name" value="JQ1882"/>
</dbReference>
<dbReference type="SMR" id="P35764"/>
<dbReference type="Proteomes" id="UP000296307">
    <property type="component" value="Genome"/>
</dbReference>
<dbReference type="GO" id="GO:0044167">
    <property type="term" value="C:host cell endoplasmic reticulum membrane"/>
    <property type="evidence" value="ECO:0007669"/>
    <property type="project" value="UniProtKB-SubCell"/>
</dbReference>
<dbReference type="GO" id="GO:0016020">
    <property type="term" value="C:membrane"/>
    <property type="evidence" value="ECO:0007669"/>
    <property type="project" value="UniProtKB-KW"/>
</dbReference>
<dbReference type="GO" id="GO:0019031">
    <property type="term" value="C:viral envelope"/>
    <property type="evidence" value="ECO:0007669"/>
    <property type="project" value="UniProtKB-KW"/>
</dbReference>
<dbReference type="GO" id="GO:0055036">
    <property type="term" value="C:virion membrane"/>
    <property type="evidence" value="ECO:0007669"/>
    <property type="project" value="UniProtKB-SubCell"/>
</dbReference>
<dbReference type="GO" id="GO:0046983">
    <property type="term" value="F:protein dimerization activity"/>
    <property type="evidence" value="ECO:0007669"/>
    <property type="project" value="InterPro"/>
</dbReference>
<dbReference type="GO" id="GO:0075512">
    <property type="term" value="P:clathrin-dependent endocytosis of virus by host cell"/>
    <property type="evidence" value="ECO:0007669"/>
    <property type="project" value="UniProtKB-KW"/>
</dbReference>
<dbReference type="GO" id="GO:0039654">
    <property type="term" value="P:fusion of virus membrane with host endosome membrane"/>
    <property type="evidence" value="ECO:0007669"/>
    <property type="project" value="UniProtKB-KW"/>
</dbReference>
<dbReference type="GO" id="GO:0052170">
    <property type="term" value="P:symbiont-mediated suppression of host innate immune response"/>
    <property type="evidence" value="ECO:0007669"/>
    <property type="project" value="UniProtKB-KW"/>
</dbReference>
<dbReference type="GO" id="GO:0019062">
    <property type="term" value="P:virion attachment to host cell"/>
    <property type="evidence" value="ECO:0007669"/>
    <property type="project" value="UniProtKB-KW"/>
</dbReference>
<dbReference type="CDD" id="cd12149">
    <property type="entry name" value="Flavi_E_C"/>
    <property type="match status" value="1"/>
</dbReference>
<dbReference type="FunFam" id="1.20.1280.260:FF:000001">
    <property type="entry name" value="Envelope glycoprotein"/>
    <property type="match status" value="1"/>
</dbReference>
<dbReference type="Gene3D" id="1.20.1280.260">
    <property type="match status" value="1"/>
</dbReference>
<dbReference type="Gene3D" id="2.60.40.350">
    <property type="match status" value="1"/>
</dbReference>
<dbReference type="Gene3D" id="2.60.98.10">
    <property type="entry name" value="Tick-borne Encephalitis virus Glycoprotein, domain 1"/>
    <property type="match status" value="1"/>
</dbReference>
<dbReference type="Gene3D" id="3.30.67.10">
    <property type="entry name" value="Viral Envelope Glycoprotein, domain 2"/>
    <property type="match status" value="1"/>
</dbReference>
<dbReference type="Gene3D" id="3.30.387.10">
    <property type="entry name" value="Viral Envelope Glycoprotein, domain 3"/>
    <property type="match status" value="1"/>
</dbReference>
<dbReference type="InterPro" id="IPR013755">
    <property type="entry name" value="Flav_gly_cen_dom_subdom1"/>
</dbReference>
<dbReference type="InterPro" id="IPR027287">
    <property type="entry name" value="Flavi_E_Ig-like"/>
</dbReference>
<dbReference type="InterPro" id="IPR026470">
    <property type="entry name" value="Flavi_E_Stem/Anchor_dom"/>
</dbReference>
<dbReference type="InterPro" id="IPR038345">
    <property type="entry name" value="Flavi_E_Stem/Anchor_dom_sf"/>
</dbReference>
<dbReference type="InterPro" id="IPR011998">
    <property type="entry name" value="Flavi_Glycoprot_E_cen/dimer"/>
</dbReference>
<dbReference type="InterPro" id="IPR000336">
    <property type="entry name" value="Flavivir/Alphavir_Ig-like_sf"/>
</dbReference>
<dbReference type="InterPro" id="IPR036253">
    <property type="entry name" value="Glycoprot_cen/dimer_sf"/>
</dbReference>
<dbReference type="InterPro" id="IPR038055">
    <property type="entry name" value="Glycoprot_E_dimer_dom"/>
</dbReference>
<dbReference type="InterPro" id="IPR013756">
    <property type="entry name" value="GlyE_cen_dom_subdom2"/>
</dbReference>
<dbReference type="InterPro" id="IPR014756">
    <property type="entry name" value="Ig_E-set"/>
</dbReference>
<dbReference type="NCBIfam" id="TIGR04240">
    <property type="entry name" value="flavi_E_stem"/>
    <property type="match status" value="1"/>
</dbReference>
<dbReference type="Pfam" id="PF21659">
    <property type="entry name" value="Flavi_E_stem"/>
    <property type="match status" value="1"/>
</dbReference>
<dbReference type="Pfam" id="PF02832">
    <property type="entry name" value="Flavi_glycop_C"/>
    <property type="match status" value="1"/>
</dbReference>
<dbReference type="Pfam" id="PF00869">
    <property type="entry name" value="Flavi_glycoprot"/>
    <property type="match status" value="1"/>
</dbReference>
<dbReference type="SUPFAM" id="SSF81296">
    <property type="entry name" value="E set domains"/>
    <property type="match status" value="1"/>
</dbReference>
<dbReference type="SUPFAM" id="SSF56983">
    <property type="entry name" value="Viral glycoprotein, central and dimerisation domains"/>
    <property type="match status" value="1"/>
</dbReference>
<proteinExistence type="inferred from homology"/>
<accession>P35764</accession>
<sequence length="496" mass="53613">SRCTHLENRDFVTGTQGTTRVTLVLELGGCVTITAEGKPSVDVWLDAIYQESPAKTREYCLHAKLSETKVAARCPTMGPAALAEERQIGTVCKRDQSDRGWGNHCGLFGKGSIVACVKAACEAKKKATGYVYDANKIVYTVKVEPHTGDYVAANETHKGRKTATFTVSSEKTILTLGEYGDVSLLCRVASGVDLAQTIILELDKTAEHLPTAWQVHRDWFNDLALPWKHEGNPHWNNVERLVEFGAPHAVKMDVYNLGDQTGVLLKALAGVPVAHIEGNKYHLKSGHVTCEVGLEKLKMKGLTYTMCDKSKFAWKRTPTDSGHDTVVMEVTFSGSKPCRIPVRAVAHGSPDVNVAMLITPNPTIENDGGGFIEMQLPPGDNIIYVGELSHQWFQTGSSIGRVFQTTRKGIERLTVIGEHAWDFGSAGGFFSSIGKAVHTVLGGAFNSIFGGVGFLPKLLMGVALAWLGLNTRNPTMSMSFLLTGGLVLAMTLGVGA</sequence>
<comment type="function">
    <molecule>Envelope protein E</molecule>
    <text evidence="3">Binds to host cell surface receptor and mediates fusion between viral and cellular membranes. Envelope protein is synthesized in the endoplasmic reticulum in the form of heterodimer with protein prM. They play a role in virion budding in the ER, and the newly formed immature particle is covered with 60 spikes composed of heterodimer between precursor prM and envelope protein E. The virion is transported to the Golgi apparatus where the low pH causes dissociation of PrM-E heterodimers and formation of E homodimers. prM-E cleavage is ineficient, and many virions are only partially matured. These uncleaved prM would play a role in immune evasion.</text>
</comment>
<comment type="subunit">
    <molecule>Envelope protein E</molecule>
    <text evidence="3">Homodimer; in the endoplasmic reticulum and Golgi.</text>
</comment>
<comment type="subcellular location">
    <molecule>Envelope protein E</molecule>
    <subcellularLocation>
        <location evidence="3">Virion membrane</location>
        <topology evidence="4">Multi-pass membrane protein</topology>
    </subcellularLocation>
    <subcellularLocation>
        <location evidence="3">Host endoplasmic reticulum membrane</location>
        <topology evidence="4">Multi-pass membrane protein</topology>
    </subcellularLocation>
</comment>
<comment type="PTM">
    <molecule>Envelope protein E</molecule>
    <text evidence="3">N-glycosylated.</text>
</comment>